<proteinExistence type="inferred from homology"/>
<gene>
    <name evidence="1" type="primary">groES</name>
    <name evidence="1" type="synonym">groS</name>
    <name type="ordered locus">COXBURSA331_A1909</name>
</gene>
<reference key="1">
    <citation type="submission" date="2007-11" db="EMBL/GenBank/DDBJ databases">
        <title>Genome sequencing of phylogenetically and phenotypically diverse Coxiella burnetii isolates.</title>
        <authorList>
            <person name="Seshadri R."/>
            <person name="Samuel J.E."/>
        </authorList>
    </citation>
    <scope>NUCLEOTIDE SEQUENCE [LARGE SCALE GENOMIC DNA]</scope>
    <source>
        <strain>RSA 331 / Henzerling II</strain>
    </source>
</reference>
<name>CH10_COXBR</name>
<accession>A9NA83</accession>
<organism>
    <name type="scientific">Coxiella burnetii (strain RSA 331 / Henzerling II)</name>
    <dbReference type="NCBI Taxonomy" id="360115"/>
    <lineage>
        <taxon>Bacteria</taxon>
        <taxon>Pseudomonadati</taxon>
        <taxon>Pseudomonadota</taxon>
        <taxon>Gammaproteobacteria</taxon>
        <taxon>Legionellales</taxon>
        <taxon>Coxiellaceae</taxon>
        <taxon>Coxiella</taxon>
    </lineage>
</organism>
<comment type="function">
    <text evidence="1">Together with the chaperonin GroEL, plays an essential role in assisting protein folding. The GroEL-GroES system forms a nano-cage that allows encapsulation of the non-native substrate proteins and provides a physical environment optimized to promote and accelerate protein folding. GroES binds to the apical surface of the GroEL ring, thereby capping the opening of the GroEL channel.</text>
</comment>
<comment type="subunit">
    <text evidence="1">Heptamer of 7 subunits arranged in a ring. Interacts with the chaperonin GroEL.</text>
</comment>
<comment type="subcellular location">
    <subcellularLocation>
        <location evidence="1">Cytoplasm</location>
    </subcellularLocation>
</comment>
<comment type="similarity">
    <text evidence="1">Belongs to the GroES chaperonin family.</text>
</comment>
<keyword id="KW-0143">Chaperone</keyword>
<keyword id="KW-0963">Cytoplasm</keyword>
<dbReference type="EMBL" id="CP000890">
    <property type="protein sequence ID" value="ABX78587.1"/>
    <property type="molecule type" value="Genomic_DNA"/>
</dbReference>
<dbReference type="RefSeq" id="WP_005770495.1">
    <property type="nucleotide sequence ID" value="NC_010117.1"/>
</dbReference>
<dbReference type="SMR" id="A9NA83"/>
<dbReference type="KEGG" id="cbs:COXBURSA331_A1909"/>
<dbReference type="HOGENOM" id="CLU_132825_2_0_6"/>
<dbReference type="GO" id="GO:0005737">
    <property type="term" value="C:cytoplasm"/>
    <property type="evidence" value="ECO:0007669"/>
    <property type="project" value="UniProtKB-SubCell"/>
</dbReference>
<dbReference type="GO" id="GO:0005524">
    <property type="term" value="F:ATP binding"/>
    <property type="evidence" value="ECO:0007669"/>
    <property type="project" value="InterPro"/>
</dbReference>
<dbReference type="GO" id="GO:0046872">
    <property type="term" value="F:metal ion binding"/>
    <property type="evidence" value="ECO:0007669"/>
    <property type="project" value="TreeGrafter"/>
</dbReference>
<dbReference type="GO" id="GO:0044183">
    <property type="term" value="F:protein folding chaperone"/>
    <property type="evidence" value="ECO:0007669"/>
    <property type="project" value="InterPro"/>
</dbReference>
<dbReference type="GO" id="GO:0051087">
    <property type="term" value="F:protein-folding chaperone binding"/>
    <property type="evidence" value="ECO:0007669"/>
    <property type="project" value="TreeGrafter"/>
</dbReference>
<dbReference type="GO" id="GO:0051082">
    <property type="term" value="F:unfolded protein binding"/>
    <property type="evidence" value="ECO:0007669"/>
    <property type="project" value="TreeGrafter"/>
</dbReference>
<dbReference type="GO" id="GO:0051085">
    <property type="term" value="P:chaperone cofactor-dependent protein refolding"/>
    <property type="evidence" value="ECO:0007669"/>
    <property type="project" value="TreeGrafter"/>
</dbReference>
<dbReference type="CDD" id="cd00320">
    <property type="entry name" value="cpn10"/>
    <property type="match status" value="1"/>
</dbReference>
<dbReference type="FunFam" id="2.30.33.40:FF:000001">
    <property type="entry name" value="10 kDa chaperonin"/>
    <property type="match status" value="1"/>
</dbReference>
<dbReference type="Gene3D" id="2.30.33.40">
    <property type="entry name" value="GroES chaperonin"/>
    <property type="match status" value="1"/>
</dbReference>
<dbReference type="HAMAP" id="MF_00580">
    <property type="entry name" value="CH10"/>
    <property type="match status" value="1"/>
</dbReference>
<dbReference type="InterPro" id="IPR020818">
    <property type="entry name" value="Chaperonin_GroES"/>
</dbReference>
<dbReference type="InterPro" id="IPR037124">
    <property type="entry name" value="Chaperonin_GroES_sf"/>
</dbReference>
<dbReference type="InterPro" id="IPR018369">
    <property type="entry name" value="Chaprnonin_Cpn10_CS"/>
</dbReference>
<dbReference type="InterPro" id="IPR011032">
    <property type="entry name" value="GroES-like_sf"/>
</dbReference>
<dbReference type="NCBIfam" id="NF001527">
    <property type="entry name" value="PRK00364.1-2"/>
    <property type="match status" value="1"/>
</dbReference>
<dbReference type="NCBIfam" id="NF001529">
    <property type="entry name" value="PRK00364.1-5"/>
    <property type="match status" value="1"/>
</dbReference>
<dbReference type="NCBIfam" id="NF001531">
    <property type="entry name" value="PRK00364.2-2"/>
    <property type="match status" value="1"/>
</dbReference>
<dbReference type="NCBIfam" id="NF001533">
    <property type="entry name" value="PRK00364.2-4"/>
    <property type="match status" value="1"/>
</dbReference>
<dbReference type="NCBIfam" id="NF001534">
    <property type="entry name" value="PRK00364.2-5"/>
    <property type="match status" value="1"/>
</dbReference>
<dbReference type="PANTHER" id="PTHR10772">
    <property type="entry name" value="10 KDA HEAT SHOCK PROTEIN"/>
    <property type="match status" value="1"/>
</dbReference>
<dbReference type="PANTHER" id="PTHR10772:SF58">
    <property type="entry name" value="CO-CHAPERONIN GROES"/>
    <property type="match status" value="1"/>
</dbReference>
<dbReference type="Pfam" id="PF00166">
    <property type="entry name" value="Cpn10"/>
    <property type="match status" value="1"/>
</dbReference>
<dbReference type="PRINTS" id="PR00297">
    <property type="entry name" value="CHAPERONIN10"/>
</dbReference>
<dbReference type="SMART" id="SM00883">
    <property type="entry name" value="Cpn10"/>
    <property type="match status" value="1"/>
</dbReference>
<dbReference type="SUPFAM" id="SSF50129">
    <property type="entry name" value="GroES-like"/>
    <property type="match status" value="1"/>
</dbReference>
<dbReference type="PROSITE" id="PS00681">
    <property type="entry name" value="CHAPERONINS_CPN10"/>
    <property type="match status" value="1"/>
</dbReference>
<protein>
    <recommendedName>
        <fullName evidence="1">Co-chaperonin GroES</fullName>
    </recommendedName>
    <alternativeName>
        <fullName evidence="1">10 kDa chaperonin</fullName>
    </alternativeName>
    <alternativeName>
        <fullName evidence="1">Chaperonin-10</fullName>
        <shortName evidence="1">Cpn10</shortName>
    </alternativeName>
</protein>
<feature type="chain" id="PRO_1000082373" description="Co-chaperonin GroES">
    <location>
        <begin position="1"/>
        <end position="96"/>
    </location>
</feature>
<evidence type="ECO:0000255" key="1">
    <source>
        <dbReference type="HAMAP-Rule" id="MF_00580"/>
    </source>
</evidence>
<sequence length="96" mass="10503">MKIRPLHDRVVVRRLEEERTSAGGIVIPDSAAEKPSRGEVISVGPGKPLDNGEVRSLDVKVGDQILFGKYAGTEVKLAGDEYIVMREDDIMGVIEK</sequence>